<accession>B0RIJ0</accession>
<name>MRAY_CLASE</name>
<comment type="function">
    <text evidence="1">Catalyzes the initial step of the lipid cycle reactions in the biosynthesis of the cell wall peptidoglycan: transfers peptidoglycan precursor phospho-MurNAc-pentapeptide from UDP-MurNAc-pentapeptide onto the lipid carrier undecaprenyl phosphate, yielding undecaprenyl-pyrophosphoryl-MurNAc-pentapeptide, known as lipid I.</text>
</comment>
<comment type="catalytic activity">
    <reaction evidence="1">
        <text>UDP-N-acetyl-alpha-D-muramoyl-L-alanyl-gamma-D-glutamyl-meso-2,6-diaminopimeloyl-D-alanyl-D-alanine + di-trans,octa-cis-undecaprenyl phosphate = di-trans,octa-cis-undecaprenyl diphospho-N-acetyl-alpha-D-muramoyl-L-alanyl-D-glutamyl-meso-2,6-diaminopimeloyl-D-alanyl-D-alanine + UMP</text>
        <dbReference type="Rhea" id="RHEA:28386"/>
        <dbReference type="ChEBI" id="CHEBI:57865"/>
        <dbReference type="ChEBI" id="CHEBI:60392"/>
        <dbReference type="ChEBI" id="CHEBI:61386"/>
        <dbReference type="ChEBI" id="CHEBI:61387"/>
        <dbReference type="EC" id="2.7.8.13"/>
    </reaction>
</comment>
<comment type="cofactor">
    <cofactor evidence="1">
        <name>Mg(2+)</name>
        <dbReference type="ChEBI" id="CHEBI:18420"/>
    </cofactor>
</comment>
<comment type="pathway">
    <text evidence="1">Cell wall biogenesis; peptidoglycan biosynthesis.</text>
</comment>
<comment type="subcellular location">
    <subcellularLocation>
        <location evidence="1">Cell membrane</location>
        <topology evidence="1">Multi-pass membrane protein</topology>
    </subcellularLocation>
</comment>
<comment type="similarity">
    <text evidence="1">Belongs to the glycosyltransferase 4 family. MraY subfamily.</text>
</comment>
<sequence length="369" mass="39595">MVALLGAGAISLVFTLFLTPLFIKLFHRLQWGQFIRDDGPQSHHTKRGTATMGGIVIILASVIGYFAGHLLTWDGIRFDPVTPSGLLVVFMMVGLGFVGFLDDYLKTRKQQSLGLGGWQKIAGQVIVATVFAVLAITLRDPVSGLTPASTAISLFRDLPLDFMALGAVIGTGLFIVWICLIVASASNGVNVADGLDGLAAGASIFSIGSYVIIGFWQFNQSCDSVSSYQNEYRCYEVASPLDLAIIAASIVGALIGFLWWNTSPAQIFMGDTGSLGLGGALAALAILSRTELLLVFIGGLFVIVAGSVVLQRAYFKITKGKRIFLMSPLHHHFELKGWAEVTVVVRFWIIAGLLVAAGVGTFYLEWITQ</sequence>
<reference key="1">
    <citation type="journal article" date="2008" name="J. Bacteriol.">
        <title>Genome of the actinomycete plant pathogen Clavibacter michiganensis subsp. sepedonicus suggests recent niche adaptation.</title>
        <authorList>
            <person name="Bentley S.D."/>
            <person name="Corton C."/>
            <person name="Brown S.E."/>
            <person name="Barron A."/>
            <person name="Clark L."/>
            <person name="Doggett J."/>
            <person name="Harris B."/>
            <person name="Ormond D."/>
            <person name="Quail M.A."/>
            <person name="May G."/>
            <person name="Francis D."/>
            <person name="Knudson D."/>
            <person name="Parkhill J."/>
            <person name="Ishimaru C.A."/>
        </authorList>
    </citation>
    <scope>NUCLEOTIDE SEQUENCE [LARGE SCALE GENOMIC DNA]</scope>
    <source>
        <strain>ATCC 33113 / DSM 20744 / JCM 9667 / LMG 2889 / ICMP 2535 / C-1</strain>
    </source>
</reference>
<proteinExistence type="inferred from homology"/>
<keyword id="KW-0131">Cell cycle</keyword>
<keyword id="KW-0132">Cell division</keyword>
<keyword id="KW-1003">Cell membrane</keyword>
<keyword id="KW-0133">Cell shape</keyword>
<keyword id="KW-0961">Cell wall biogenesis/degradation</keyword>
<keyword id="KW-0460">Magnesium</keyword>
<keyword id="KW-0472">Membrane</keyword>
<keyword id="KW-0479">Metal-binding</keyword>
<keyword id="KW-0573">Peptidoglycan synthesis</keyword>
<keyword id="KW-0808">Transferase</keyword>
<keyword id="KW-0812">Transmembrane</keyword>
<keyword id="KW-1133">Transmembrane helix</keyword>
<feature type="chain" id="PRO_1000074537" description="Phospho-N-acetylmuramoyl-pentapeptide-transferase">
    <location>
        <begin position="1"/>
        <end position="369"/>
    </location>
</feature>
<feature type="transmembrane region" description="Helical" evidence="1">
    <location>
        <begin position="3"/>
        <end position="23"/>
    </location>
</feature>
<feature type="transmembrane region" description="Helical" evidence="1">
    <location>
        <begin position="53"/>
        <end position="73"/>
    </location>
</feature>
<feature type="transmembrane region" description="Helical" evidence="1">
    <location>
        <begin position="81"/>
        <end position="101"/>
    </location>
</feature>
<feature type="transmembrane region" description="Helical" evidence="1">
    <location>
        <begin position="118"/>
        <end position="138"/>
    </location>
</feature>
<feature type="transmembrane region" description="Helical" evidence="1">
    <location>
        <begin position="162"/>
        <end position="182"/>
    </location>
</feature>
<feature type="transmembrane region" description="Helical" evidence="1">
    <location>
        <begin position="198"/>
        <end position="218"/>
    </location>
</feature>
<feature type="transmembrane region" description="Helical" evidence="1">
    <location>
        <begin position="240"/>
        <end position="260"/>
    </location>
</feature>
<feature type="transmembrane region" description="Helical" evidence="1">
    <location>
        <begin position="267"/>
        <end position="287"/>
    </location>
</feature>
<feature type="transmembrane region" description="Helical" evidence="1">
    <location>
        <begin position="290"/>
        <end position="310"/>
    </location>
</feature>
<feature type="transmembrane region" description="Helical" evidence="1">
    <location>
        <begin position="347"/>
        <end position="367"/>
    </location>
</feature>
<evidence type="ECO:0000255" key="1">
    <source>
        <dbReference type="HAMAP-Rule" id="MF_00038"/>
    </source>
</evidence>
<protein>
    <recommendedName>
        <fullName evidence="1">Phospho-N-acetylmuramoyl-pentapeptide-transferase</fullName>
        <ecNumber evidence="1">2.7.8.13</ecNumber>
    </recommendedName>
    <alternativeName>
        <fullName evidence="1">UDP-MurNAc-pentapeptide phosphotransferase</fullName>
    </alternativeName>
</protein>
<gene>
    <name evidence="1" type="primary">mraY</name>
    <name type="ordered locus">CMS1370</name>
</gene>
<organism>
    <name type="scientific">Clavibacter sepedonicus</name>
    <name type="common">Clavibacter michiganensis subsp. sepedonicus</name>
    <dbReference type="NCBI Taxonomy" id="31964"/>
    <lineage>
        <taxon>Bacteria</taxon>
        <taxon>Bacillati</taxon>
        <taxon>Actinomycetota</taxon>
        <taxon>Actinomycetes</taxon>
        <taxon>Micrococcales</taxon>
        <taxon>Microbacteriaceae</taxon>
        <taxon>Clavibacter</taxon>
    </lineage>
</organism>
<dbReference type="EC" id="2.7.8.13" evidence="1"/>
<dbReference type="EMBL" id="AM849034">
    <property type="protein sequence ID" value="CAQ01481.1"/>
    <property type="molecule type" value="Genomic_DNA"/>
</dbReference>
<dbReference type="RefSeq" id="WP_012298748.1">
    <property type="nucleotide sequence ID" value="NZ_MZMN01000003.1"/>
</dbReference>
<dbReference type="SMR" id="B0RIJ0"/>
<dbReference type="STRING" id="31964.CMS1370"/>
<dbReference type="KEGG" id="cms:CMS1370"/>
<dbReference type="eggNOG" id="COG0472">
    <property type="taxonomic scope" value="Bacteria"/>
</dbReference>
<dbReference type="HOGENOM" id="CLU_023982_0_1_11"/>
<dbReference type="OrthoDB" id="9805475at2"/>
<dbReference type="UniPathway" id="UPA00219"/>
<dbReference type="Proteomes" id="UP000001318">
    <property type="component" value="Chromosome"/>
</dbReference>
<dbReference type="GO" id="GO:0005886">
    <property type="term" value="C:plasma membrane"/>
    <property type="evidence" value="ECO:0007669"/>
    <property type="project" value="UniProtKB-SubCell"/>
</dbReference>
<dbReference type="GO" id="GO:0046872">
    <property type="term" value="F:metal ion binding"/>
    <property type="evidence" value="ECO:0007669"/>
    <property type="project" value="UniProtKB-KW"/>
</dbReference>
<dbReference type="GO" id="GO:0008963">
    <property type="term" value="F:phospho-N-acetylmuramoyl-pentapeptide-transferase activity"/>
    <property type="evidence" value="ECO:0007669"/>
    <property type="project" value="UniProtKB-UniRule"/>
</dbReference>
<dbReference type="GO" id="GO:0051992">
    <property type="term" value="F:UDP-N-acetylmuramoyl-L-alanyl-D-glutamyl-meso-2,6-diaminopimelyl-D-alanyl-D-alanine:undecaprenyl-phosphate transferase activity"/>
    <property type="evidence" value="ECO:0007669"/>
    <property type="project" value="RHEA"/>
</dbReference>
<dbReference type="GO" id="GO:0051301">
    <property type="term" value="P:cell division"/>
    <property type="evidence" value="ECO:0007669"/>
    <property type="project" value="UniProtKB-KW"/>
</dbReference>
<dbReference type="GO" id="GO:0071555">
    <property type="term" value="P:cell wall organization"/>
    <property type="evidence" value="ECO:0007669"/>
    <property type="project" value="UniProtKB-KW"/>
</dbReference>
<dbReference type="GO" id="GO:0009252">
    <property type="term" value="P:peptidoglycan biosynthetic process"/>
    <property type="evidence" value="ECO:0007669"/>
    <property type="project" value="UniProtKB-UniRule"/>
</dbReference>
<dbReference type="GO" id="GO:0008360">
    <property type="term" value="P:regulation of cell shape"/>
    <property type="evidence" value="ECO:0007669"/>
    <property type="project" value="UniProtKB-KW"/>
</dbReference>
<dbReference type="CDD" id="cd06852">
    <property type="entry name" value="GT_MraY"/>
    <property type="match status" value="1"/>
</dbReference>
<dbReference type="HAMAP" id="MF_00038">
    <property type="entry name" value="MraY"/>
    <property type="match status" value="1"/>
</dbReference>
<dbReference type="InterPro" id="IPR000715">
    <property type="entry name" value="Glycosyl_transferase_4"/>
</dbReference>
<dbReference type="InterPro" id="IPR003524">
    <property type="entry name" value="PNAcMuramoyl-5peptid_Trfase"/>
</dbReference>
<dbReference type="InterPro" id="IPR018480">
    <property type="entry name" value="PNAcMuramoyl-5peptid_Trfase_CS"/>
</dbReference>
<dbReference type="NCBIfam" id="TIGR00445">
    <property type="entry name" value="mraY"/>
    <property type="match status" value="1"/>
</dbReference>
<dbReference type="PANTHER" id="PTHR22926">
    <property type="entry name" value="PHOSPHO-N-ACETYLMURAMOYL-PENTAPEPTIDE-TRANSFERASE"/>
    <property type="match status" value="1"/>
</dbReference>
<dbReference type="PANTHER" id="PTHR22926:SF5">
    <property type="entry name" value="PHOSPHO-N-ACETYLMURAMOYL-PENTAPEPTIDE-TRANSFERASE HOMOLOG"/>
    <property type="match status" value="1"/>
</dbReference>
<dbReference type="Pfam" id="PF00953">
    <property type="entry name" value="Glycos_transf_4"/>
    <property type="match status" value="1"/>
</dbReference>
<dbReference type="PROSITE" id="PS01348">
    <property type="entry name" value="MRAY_2"/>
    <property type="match status" value="1"/>
</dbReference>